<keyword id="KW-0025">Alternative splicing</keyword>
<keyword id="KW-0029">Amino-acid transport</keyword>
<keyword id="KW-1003">Cell membrane</keyword>
<keyword id="KW-0325">Glycoprotein</keyword>
<keyword id="KW-0472">Membrane</keyword>
<keyword id="KW-0532">Neurotransmitter transport</keyword>
<keyword id="KW-0597">Phosphoprotein</keyword>
<keyword id="KW-1185">Reference proteome</keyword>
<keyword id="KW-0769">Symport</keyword>
<keyword id="KW-0812">Transmembrane</keyword>
<keyword id="KW-1133">Transmembrane helix</keyword>
<keyword id="KW-0813">Transport</keyword>
<dbReference type="EMBL" id="U52687">
    <property type="protein sequence ID" value="AAB01158.1"/>
    <property type="molecule type" value="mRNA"/>
</dbReference>
<dbReference type="EMBL" id="U52688">
    <property type="protein sequence ID" value="AAB01159.1"/>
    <property type="molecule type" value="mRNA"/>
</dbReference>
<dbReference type="EMBL" id="U52689">
    <property type="protein sequence ID" value="AAB01160.1"/>
    <property type="molecule type" value="mRNA"/>
</dbReference>
<dbReference type="EMBL" id="U52690">
    <property type="protein sequence ID" value="AAB01161.1"/>
    <property type="molecule type" value="mRNA"/>
</dbReference>
<dbReference type="RefSeq" id="NP_001229271.1">
    <property type="nucleotide sequence ID" value="NM_001242342.1"/>
</dbReference>
<dbReference type="RefSeq" id="NP_001229272.1">
    <property type="nucleotide sequence ID" value="NM_001242343.1"/>
</dbReference>
<dbReference type="SMR" id="Q28039"/>
<dbReference type="FunCoup" id="Q28039">
    <property type="interactions" value="201"/>
</dbReference>
<dbReference type="STRING" id="9913.ENSBTAP00000073186"/>
<dbReference type="BindingDB" id="Q28039"/>
<dbReference type="ChEMBL" id="CHEMBL3638333"/>
<dbReference type="GlyCosmos" id="Q28039">
    <property type="glycosylation" value="4 sites, No reported glycans"/>
</dbReference>
<dbReference type="GlyGen" id="Q28039">
    <property type="glycosylation" value="4 sites"/>
</dbReference>
<dbReference type="PaxDb" id="9913-ENSBTAP00000007938"/>
<dbReference type="GeneID" id="282368"/>
<dbReference type="KEGG" id="bta:282368"/>
<dbReference type="CTD" id="6536"/>
<dbReference type="eggNOG" id="KOG3660">
    <property type="taxonomic scope" value="Eukaryota"/>
</dbReference>
<dbReference type="InParanoid" id="Q28039"/>
<dbReference type="OrthoDB" id="6581954at2759"/>
<dbReference type="Proteomes" id="UP000009136">
    <property type="component" value="Unplaced"/>
</dbReference>
<dbReference type="GO" id="GO:0005886">
    <property type="term" value="C:plasma membrane"/>
    <property type="evidence" value="ECO:0000250"/>
    <property type="project" value="UniProtKB"/>
</dbReference>
<dbReference type="GO" id="GO:0005283">
    <property type="term" value="F:amino acid:sodium symporter activity"/>
    <property type="evidence" value="ECO:0000318"/>
    <property type="project" value="GO_Central"/>
</dbReference>
<dbReference type="GO" id="GO:0015375">
    <property type="term" value="F:glycine:sodium symporter activity"/>
    <property type="evidence" value="ECO:0000250"/>
    <property type="project" value="UniProtKB"/>
</dbReference>
<dbReference type="GO" id="GO:1903804">
    <property type="term" value="P:glycine import across plasma membrane"/>
    <property type="evidence" value="ECO:0000318"/>
    <property type="project" value="GO_Central"/>
</dbReference>
<dbReference type="GO" id="GO:0006836">
    <property type="term" value="P:neurotransmitter transport"/>
    <property type="evidence" value="ECO:0007669"/>
    <property type="project" value="UniProtKB-KW"/>
</dbReference>
<dbReference type="GO" id="GO:0060092">
    <property type="term" value="P:regulation of synaptic transmission, glycinergic"/>
    <property type="evidence" value="ECO:0000250"/>
    <property type="project" value="UniProtKB"/>
</dbReference>
<dbReference type="GO" id="GO:0035725">
    <property type="term" value="P:sodium ion transmembrane transport"/>
    <property type="evidence" value="ECO:0000318"/>
    <property type="project" value="GO_Central"/>
</dbReference>
<dbReference type="CDD" id="cd11498">
    <property type="entry name" value="SLC6sbd_GlyT1"/>
    <property type="match status" value="1"/>
</dbReference>
<dbReference type="InterPro" id="IPR000175">
    <property type="entry name" value="Na/ntran_symport"/>
</dbReference>
<dbReference type="InterPro" id="IPR003028">
    <property type="entry name" value="Na/ntran_symport_glycine_GLY1"/>
</dbReference>
<dbReference type="InterPro" id="IPR037272">
    <property type="entry name" value="SNS_sf"/>
</dbReference>
<dbReference type="PANTHER" id="PTHR11616:SF263">
    <property type="entry name" value="SODIUM- AND CHLORIDE-DEPENDENT GLYCINE TRANSPORTER 1"/>
    <property type="match status" value="1"/>
</dbReference>
<dbReference type="PANTHER" id="PTHR11616">
    <property type="entry name" value="SODIUM/CHLORIDE DEPENDENT TRANSPORTER"/>
    <property type="match status" value="1"/>
</dbReference>
<dbReference type="Pfam" id="PF00209">
    <property type="entry name" value="SNF"/>
    <property type="match status" value="1"/>
</dbReference>
<dbReference type="PRINTS" id="PR01204">
    <property type="entry name" value="GLY1TRNSPORT"/>
</dbReference>
<dbReference type="PRINTS" id="PR00176">
    <property type="entry name" value="NANEUSMPORT"/>
</dbReference>
<dbReference type="SUPFAM" id="SSF161070">
    <property type="entry name" value="SNF-like"/>
    <property type="match status" value="1"/>
</dbReference>
<dbReference type="PROSITE" id="PS00610">
    <property type="entry name" value="NA_NEUROTRAN_SYMP_1"/>
    <property type="match status" value="1"/>
</dbReference>
<dbReference type="PROSITE" id="PS00754">
    <property type="entry name" value="NA_NEUROTRAN_SYMP_2"/>
    <property type="match status" value="1"/>
</dbReference>
<dbReference type="PROSITE" id="PS50267">
    <property type="entry name" value="NA_NEUROTRAN_SYMP_3"/>
    <property type="match status" value="1"/>
</dbReference>
<protein>
    <recommendedName>
        <fullName>Sodium- and chloride-dependent glycine transporter 1</fullName>
        <shortName>GlyT-1</shortName>
        <shortName>GlyT1</shortName>
    </recommendedName>
    <alternativeName>
        <fullName>Solute carrier family 6 member 9</fullName>
    </alternativeName>
</protein>
<accession>Q28039</accession>
<accession>Q28040</accession>
<accession>Q29420</accession>
<proteinExistence type="evidence at transcript level"/>
<gene>
    <name type="primary">SLC6A9</name>
</gene>
<feature type="chain" id="PRO_0000214779" description="Sodium- and chloride-dependent glycine transporter 1">
    <location>
        <begin position="1"/>
        <end position="638"/>
    </location>
</feature>
<feature type="topological domain" description="Cytoplasmic" evidence="4">
    <location>
        <begin position="1"/>
        <end position="40"/>
    </location>
</feature>
<feature type="transmembrane region" description="Helical; Name=1" evidence="4">
    <location>
        <begin position="41"/>
        <end position="61"/>
    </location>
</feature>
<feature type="transmembrane region" description="Helical; Name=2" evidence="4">
    <location>
        <begin position="69"/>
        <end position="88"/>
    </location>
</feature>
<feature type="transmembrane region" description="Helical; Name=3" evidence="4">
    <location>
        <begin position="112"/>
        <end position="132"/>
    </location>
</feature>
<feature type="topological domain" description="Extracellular" evidence="4">
    <location>
        <begin position="133"/>
        <end position="219"/>
    </location>
</feature>
<feature type="transmembrane region" description="Helical; Name=4" evidence="4">
    <location>
        <begin position="220"/>
        <end position="238"/>
    </location>
</feature>
<feature type="transmembrane region" description="Helical; Name=5" evidence="4">
    <location>
        <begin position="247"/>
        <end position="264"/>
    </location>
</feature>
<feature type="transmembrane region" description="Helical; Name=6" evidence="4">
    <location>
        <begin position="300"/>
        <end position="317"/>
    </location>
</feature>
<feature type="transmembrane region" description="Helical; Name=7" evidence="4">
    <location>
        <begin position="329"/>
        <end position="350"/>
    </location>
</feature>
<feature type="transmembrane region" description="Helical; Name=8" evidence="4">
    <location>
        <begin position="383"/>
        <end position="402"/>
    </location>
</feature>
<feature type="transmembrane region" description="Helical; Name=9" evidence="4">
    <location>
        <begin position="431"/>
        <end position="449"/>
    </location>
</feature>
<feature type="transmembrane region" description="Helical; Name=10" evidence="4">
    <location>
        <begin position="465"/>
        <end position="485"/>
    </location>
</feature>
<feature type="transmembrane region" description="Helical; Name=11" evidence="4">
    <location>
        <begin position="506"/>
        <end position="525"/>
    </location>
</feature>
<feature type="transmembrane region" description="Helical; Name=12" evidence="4">
    <location>
        <begin position="544"/>
        <end position="562"/>
    </location>
</feature>
<feature type="topological domain" description="Cytoplasmic" evidence="4">
    <location>
        <begin position="563"/>
        <end position="638"/>
    </location>
</feature>
<feature type="region of interest" description="Disordered" evidence="5">
    <location>
        <begin position="1"/>
        <end position="29"/>
    </location>
</feature>
<feature type="region of interest" description="Disordered" evidence="5">
    <location>
        <begin position="597"/>
        <end position="638"/>
    </location>
</feature>
<feature type="region of interest" description="Essential for interaction with EXOC1" evidence="2">
    <location>
        <begin position="627"/>
        <end position="638"/>
    </location>
</feature>
<feature type="compositionally biased region" description="Polar residues" evidence="5">
    <location>
        <begin position="627"/>
        <end position="638"/>
    </location>
</feature>
<feature type="modified residue" description="Phosphothreonine" evidence="1">
    <location>
        <position position="603"/>
    </location>
</feature>
<feature type="modified residue" description="Phosphoserine" evidence="1">
    <location>
        <position position="605"/>
    </location>
</feature>
<feature type="modified residue" description="Phosphoserine" evidence="3">
    <location>
        <position position="630"/>
    </location>
</feature>
<feature type="glycosylation site" description="N-linked (GlcNAc...) asparagine" evidence="4">
    <location>
        <position position="169"/>
    </location>
</feature>
<feature type="glycosylation site" description="N-linked (GlcNAc...) asparagine" evidence="4">
    <location>
        <position position="172"/>
    </location>
</feature>
<feature type="glycosylation site" description="N-linked (GlcNAc...) asparagine" evidence="4">
    <location>
        <position position="182"/>
    </location>
</feature>
<feature type="glycosylation site" description="N-linked (GlcNAc...) asparagine" evidence="4">
    <location>
        <position position="188"/>
    </location>
</feature>
<feature type="splice variant" id="VSP_006268" description="In isoform 2." evidence="6">
    <original>MAAAQGPVAPSSLE</original>
    <variation>MVGKGAKGM</variation>
    <location>
        <begin position="1"/>
        <end position="14"/>
    </location>
</feature>
<feature type="splice variant" id="VSP_006269" description="In isoform 3." evidence="6">
    <original>YPSWRVRIGFLMALSSVICIPLYALFQFCRTDGDTLLHRLKNATKPSRDWGPALLEHRTRRYAPTTTPSPEDGLEVQPLHPDKAQIPMVGSNGSSRFQDSRI</original>
    <variation>SSQTGLPLFTCQIAPAHVPQPLSGARTPSPKPWSVRVSVLRAPLCSDSPGRAASNPL</variation>
    <location>
        <begin position="537"/>
        <end position="638"/>
    </location>
</feature>
<name>SC6A9_BOVIN</name>
<organism>
    <name type="scientific">Bos taurus</name>
    <name type="common">Bovine</name>
    <dbReference type="NCBI Taxonomy" id="9913"/>
    <lineage>
        <taxon>Eukaryota</taxon>
        <taxon>Metazoa</taxon>
        <taxon>Chordata</taxon>
        <taxon>Craniata</taxon>
        <taxon>Vertebrata</taxon>
        <taxon>Euteleostomi</taxon>
        <taxon>Mammalia</taxon>
        <taxon>Eutheria</taxon>
        <taxon>Laurasiatheria</taxon>
        <taxon>Artiodactyla</taxon>
        <taxon>Ruminantia</taxon>
        <taxon>Pecora</taxon>
        <taxon>Bovidae</taxon>
        <taxon>Bovinae</taxon>
        <taxon>Bos</taxon>
    </lineage>
</organism>
<evidence type="ECO:0000250" key="1">
    <source>
        <dbReference type="UniProtKB" id="P28571"/>
    </source>
</evidence>
<evidence type="ECO:0000250" key="2">
    <source>
        <dbReference type="UniProtKB" id="P28572"/>
    </source>
</evidence>
<evidence type="ECO:0000250" key="3">
    <source>
        <dbReference type="UniProtKB" id="P48067"/>
    </source>
</evidence>
<evidence type="ECO:0000255" key="4"/>
<evidence type="ECO:0000256" key="5">
    <source>
        <dbReference type="SAM" id="MobiDB-lite"/>
    </source>
</evidence>
<evidence type="ECO:0000303" key="6">
    <source ref="1"/>
</evidence>
<evidence type="ECO:0000305" key="7"/>
<reference key="1">
    <citation type="submission" date="1996-04" db="EMBL/GenBank/DDBJ databases">
        <authorList>
            <person name="Jones E.M.C."/>
        </authorList>
    </citation>
    <scope>NUCLEOTIDE SEQUENCE [MRNA] (ISOFORMS 1; 2 AND 3)</scope>
</reference>
<sequence>MAAAQGPVAPSSLEQNGAVPSEATKKDQNLKRGNWGNQIEFVLTSVGYAVGLGNVWRFPYLCYRNGGGAFMFPYFIMLIFCGIPLFFMELSFGQFASQGCLGVWRISPMFKGVGYGMMVVSTYIGIYYNVVICIAFYYFFSSMTPVLPWTYCNNPWNTPDCMSVLDNPNITNGSQPPALPGNVSQALNQTLKRTSPSEEYWRLYVLKLSDDIGNFGEVRLPLLGCLGVSWVVVFLCLIRGVKSSGKVVYFTATFPYVVLTILFIRGVTLEGAFTGIMYYLTPQWDKILEAKVWGDAASQIFYSLGCAWGGLVTMASYNKFHNNCYRDSVIISITNCATSVYAGFVIFSILGFMANHLGVDVSRVADHGPGLAFVAYPEALTLLPISPLWSLLFFFMLILLGLGTQFCLLETLVTAIVDEVGNEWILQKKTYVTLGVAVAGFLLGIPLTSQAGIYWLLLMDNYAASFSLVIISCIMCVSIMYIYGHQNYFQDIQMMLGFPPPLFFQICWRFVSPAIIFFILIFSVIQYQPITYNQYQYPSWRVRIGFLMALSSVICIPLYALFQFCRTDGDTLLHRLKNATKPSRDWGPALLEHRTRRYAPTTTPSPEDGLEVQPLHPDKAQIPMVGSNGSSRFQDSRI</sequence>
<comment type="function">
    <text evidence="1">Sodium- and chloride-dependent glycine transporter which is essential for regulating glycine concentrations at inhibitory glycinergic synapses.</text>
</comment>
<comment type="catalytic activity">
    <reaction evidence="1">
        <text>glycine(out) + chloride(out) + 2 Na(+)(out) = glycine(in) + chloride(in) + 2 Na(+)(in)</text>
        <dbReference type="Rhea" id="RHEA:70691"/>
        <dbReference type="ChEBI" id="CHEBI:17996"/>
        <dbReference type="ChEBI" id="CHEBI:29101"/>
        <dbReference type="ChEBI" id="CHEBI:57305"/>
    </reaction>
</comment>
<comment type="subunit">
    <text evidence="2">Interacts with EXOC1; interaction increases the transporter capacity of SLC6A9 probably by promoting its insertion into the cell membrane (By similarity). Interacts with EXOC3 and EXOC4 (By similarity).</text>
</comment>
<comment type="subcellular location">
    <subcellularLocation>
        <location evidence="2">Cell membrane</location>
        <topology evidence="4">Multi-pass membrane protein</topology>
    </subcellularLocation>
</comment>
<comment type="alternative products">
    <event type="alternative splicing"/>
    <isoform>
        <id>Q28039-1</id>
        <name>1</name>
        <name>GlyT-1B</name>
        <sequence type="displayed"/>
    </isoform>
    <isoform>
        <id>Q28039-2</id>
        <name>2</name>
        <name>GlyT-1A</name>
        <sequence type="described" ref="VSP_006268"/>
    </isoform>
    <isoform>
        <id>Q28039-3</id>
        <name>3</name>
        <name>GlyT-1F</name>
        <sequence type="described" ref="VSP_006269"/>
    </isoform>
</comment>
<comment type="similarity">
    <text evidence="7">Belongs to the sodium:neurotransmitter symporter (SNF) (TC 2.A.22) family. SLC6A9 subfamily.</text>
</comment>